<sequence length="588" mass="67983">MEVIHGRPYCCRELEGADILSNTFYSNGLHTPYETTIRPTASEDRYQELRQALPQCRLRWGADREYGGMLPVSLPEEHRPKCEPPRLMSKGHQHYGFGGEIWPKKLPIEQYYYLTQNKKSDLYGNDSLLPKPPNSTVGEICSSYPIEHPYHTHISRGAMFPAFTSPKDLYTGVKARTQQPFPPTLPTKTYDSTILKTRGNPYRYELLDLPTDSKKKALTWPGQSVYYDFPKCVEKNKPVFYPKPPKTFAPNSSVTPWDTMTSAKDANIQRNLERSHWLTSYTHDFTGLGPMSPLELDDYREKELAELTGQIGFDPQPQEKFHPSLKPPRPLDGRIARLIQNQRPLEATVQIPPSCPDCTPRVLCAFHTFIPSSAEMMAMNDHLLSGLTHKNQNIEDKIKEEQRLLSTYALPSSYESKDMGSLFDLHSLPKITDTKKSDDLYWRQLDVKPLPIARSKSNHYIDYEPHKSTYRDPYAMCLNPVRLSKSNILQNKTDMADLTFDNYLRKPEFLGTDIESSDETRPLLNWISRAGVPKHHTNFRDFKNSFSRSMAHKRLHNSIQEEQKDLRDKLQCGMRHQFYGHNSHYFYN</sequence>
<evidence type="ECO:0000250" key="1">
    <source>
        <dbReference type="UniProtKB" id="E1B9R1"/>
    </source>
</evidence>
<evidence type="ECO:0000250" key="2">
    <source>
        <dbReference type="UniProtKB" id="Q8N865"/>
    </source>
</evidence>
<evidence type="ECO:0007744" key="3">
    <source>
    </source>
</evidence>
<name>SMIP4_RAT</name>
<protein>
    <recommendedName>
        <fullName>Sperm-associated microtubule inner protein 4</fullName>
    </recommendedName>
</protein>
<reference key="1">
    <citation type="journal article" date="2004" name="Genome Res.">
        <title>The status, quality, and expansion of the NIH full-length cDNA project: the Mammalian Gene Collection (MGC).</title>
        <authorList>
            <consortium name="The MGC Project Team"/>
        </authorList>
    </citation>
    <scope>NUCLEOTIDE SEQUENCE [LARGE SCALE MRNA]</scope>
    <source>
        <tissue>Testis</tissue>
    </source>
</reference>
<reference key="2">
    <citation type="journal article" date="2012" name="Nat. Commun.">
        <title>Quantitative maps of protein phosphorylation sites across 14 different rat organs and tissues.</title>
        <authorList>
            <person name="Lundby A."/>
            <person name="Secher A."/>
            <person name="Lage K."/>
            <person name="Nordsborg N.B."/>
            <person name="Dmytriyev A."/>
            <person name="Lundby C."/>
            <person name="Olsen J.V."/>
        </authorList>
    </citation>
    <scope>PHOSPHORYLATION [LARGE SCALE ANALYSIS] AT THR-219; SER-224; SER-406; SER-421; SER-427; SER-437; TYR-441; SER-457; SER-484; THR-512; SER-516 AND SER-545</scope>
    <scope>IDENTIFICATION BY MASS SPECTROMETRY [LARGE SCALE ANALYSIS]</scope>
</reference>
<proteinExistence type="evidence at protein level"/>
<comment type="function">
    <text evidence="1">Microtubule inner protein (MIP) part of the dynein-decorated doublet microtubules (DMTs) in flagellum axoneme. May serve to reinforce and thus stabilize the microtubule structure in the sperm flagella.</text>
</comment>
<comment type="subcellular location">
    <subcellularLocation>
        <location evidence="2">Cytoplasm</location>
        <location evidence="2">Cytoskeleton</location>
        <location evidence="2">Microtubule organizing center</location>
        <location evidence="2">Centrosome</location>
    </subcellularLocation>
    <subcellularLocation>
        <location evidence="1">Cytoplasm</location>
        <location evidence="1">Cytoskeleton</location>
        <location evidence="1">Flagellum axoneme</location>
    </subcellularLocation>
    <text evidence="1">Localizes to the A-tubules of DMTs.</text>
</comment>
<feature type="chain" id="PRO_0000089589" description="Sperm-associated microtubule inner protein 4">
    <location>
        <begin position="1"/>
        <end position="588"/>
    </location>
</feature>
<feature type="modified residue" description="Phosphothreonine" evidence="3">
    <location>
        <position position="219"/>
    </location>
</feature>
<feature type="modified residue" description="Phosphoserine" evidence="3">
    <location>
        <position position="224"/>
    </location>
</feature>
<feature type="modified residue" description="Phosphoserine" evidence="3">
    <location>
        <position position="406"/>
    </location>
</feature>
<feature type="modified residue" description="Phosphoserine" evidence="3">
    <location>
        <position position="421"/>
    </location>
</feature>
<feature type="modified residue" description="Phosphoserine" evidence="3">
    <location>
        <position position="427"/>
    </location>
</feature>
<feature type="modified residue" description="Phosphoserine" evidence="3">
    <location>
        <position position="437"/>
    </location>
</feature>
<feature type="modified residue" description="Phosphotyrosine" evidence="3">
    <location>
        <position position="441"/>
    </location>
</feature>
<feature type="modified residue" description="Phosphoserine" evidence="3">
    <location>
        <position position="457"/>
    </location>
</feature>
<feature type="modified residue" description="Phosphoserine" evidence="3">
    <location>
        <position position="484"/>
    </location>
</feature>
<feature type="modified residue" description="Phosphothreonine" evidence="3">
    <location>
        <position position="512"/>
    </location>
</feature>
<feature type="modified residue" description="Phosphoserine" evidence="3">
    <location>
        <position position="516"/>
    </location>
</feature>
<feature type="modified residue" description="Phosphoserine" evidence="3">
    <location>
        <position position="545"/>
    </location>
</feature>
<feature type="cross-link" description="Glycyl lysine isopeptide (Lys-Gly) (interchain with G-Cter in SUMO2)" evidence="2">
    <location>
        <position position="543"/>
    </location>
</feature>
<organism>
    <name type="scientific">Rattus norvegicus</name>
    <name type="common">Rat</name>
    <dbReference type="NCBI Taxonomy" id="10116"/>
    <lineage>
        <taxon>Eukaryota</taxon>
        <taxon>Metazoa</taxon>
        <taxon>Chordata</taxon>
        <taxon>Craniata</taxon>
        <taxon>Vertebrata</taxon>
        <taxon>Euteleostomi</taxon>
        <taxon>Mammalia</taxon>
        <taxon>Eutheria</taxon>
        <taxon>Euarchontoglires</taxon>
        <taxon>Glires</taxon>
        <taxon>Rodentia</taxon>
        <taxon>Myomorpha</taxon>
        <taxon>Muroidea</taxon>
        <taxon>Muridae</taxon>
        <taxon>Murinae</taxon>
        <taxon>Rattus</taxon>
    </lineage>
</organism>
<gene>
    <name type="primary">Spmip4</name>
</gene>
<accession>Q6AYM0</accession>
<dbReference type="EMBL" id="BC078992">
    <property type="protein sequence ID" value="AAH78992.1"/>
    <property type="molecule type" value="mRNA"/>
</dbReference>
<dbReference type="RefSeq" id="NP_001019500.1">
    <property type="nucleotide sequence ID" value="NM_001024329.2"/>
</dbReference>
<dbReference type="FunCoup" id="Q6AYM0">
    <property type="interactions" value="251"/>
</dbReference>
<dbReference type="STRING" id="10116.ENSRNOP00000014331"/>
<dbReference type="GlyGen" id="Q6AYM0">
    <property type="glycosylation" value="1 site"/>
</dbReference>
<dbReference type="iPTMnet" id="Q6AYM0"/>
<dbReference type="PhosphoSitePlus" id="Q6AYM0"/>
<dbReference type="PaxDb" id="10116-ENSRNOP00000014331"/>
<dbReference type="GeneID" id="500124"/>
<dbReference type="KEGG" id="rno:500124"/>
<dbReference type="UCSC" id="RGD:1563788">
    <property type="organism name" value="rat"/>
</dbReference>
<dbReference type="AGR" id="RGD:1563788"/>
<dbReference type="CTD" id="136895"/>
<dbReference type="RGD" id="1563788">
    <property type="gene designation" value="Spmip4"/>
</dbReference>
<dbReference type="VEuPathDB" id="HostDB:ENSRNOG00000010594"/>
<dbReference type="eggNOG" id="ENOG502QUAM">
    <property type="taxonomic scope" value="Eukaryota"/>
</dbReference>
<dbReference type="HOGENOM" id="CLU_038659_0_0_1"/>
<dbReference type="InParanoid" id="Q6AYM0"/>
<dbReference type="OrthoDB" id="16040at9989"/>
<dbReference type="PhylomeDB" id="Q6AYM0"/>
<dbReference type="TreeFam" id="TF336164"/>
<dbReference type="PRO" id="PR:Q6AYM0"/>
<dbReference type="Proteomes" id="UP000002494">
    <property type="component" value="Chromosome 4"/>
</dbReference>
<dbReference type="Bgee" id="ENSRNOG00000010594">
    <property type="expression patterns" value="Expressed in testis and 18 other cell types or tissues"/>
</dbReference>
<dbReference type="GO" id="GO:0005813">
    <property type="term" value="C:centrosome"/>
    <property type="evidence" value="ECO:0000250"/>
    <property type="project" value="UniProtKB"/>
</dbReference>
<dbReference type="GO" id="GO:0005737">
    <property type="term" value="C:cytoplasm"/>
    <property type="evidence" value="ECO:0007669"/>
    <property type="project" value="UniProtKB-KW"/>
</dbReference>
<dbReference type="GO" id="GO:0031514">
    <property type="term" value="C:motile cilium"/>
    <property type="evidence" value="ECO:0007669"/>
    <property type="project" value="UniProtKB-KW"/>
</dbReference>
<dbReference type="InterPro" id="IPR027886">
    <property type="entry name" value="SPMIP4"/>
</dbReference>
<dbReference type="PANTHER" id="PTHR31393">
    <property type="entry name" value="C5ORF31"/>
    <property type="match status" value="1"/>
</dbReference>
<dbReference type="PANTHER" id="PTHR31393:SF2">
    <property type="entry name" value="CHROMOSOME 7 OPEN READING FRAME 31"/>
    <property type="match status" value="1"/>
</dbReference>
<dbReference type="Pfam" id="PF15093">
    <property type="entry name" value="SPMIP4-like"/>
    <property type="match status" value="1"/>
</dbReference>
<keyword id="KW-0966">Cell projection</keyword>
<keyword id="KW-0969">Cilium</keyword>
<keyword id="KW-0963">Cytoplasm</keyword>
<keyword id="KW-0206">Cytoskeleton</keyword>
<keyword id="KW-0282">Flagellum</keyword>
<keyword id="KW-1017">Isopeptide bond</keyword>
<keyword id="KW-0597">Phosphoprotein</keyword>
<keyword id="KW-1185">Reference proteome</keyword>
<keyword id="KW-0832">Ubl conjugation</keyword>